<feature type="chain" id="PRO_0000266885" description="Probable GTP-binding protein EngB">
    <location>
        <begin position="1"/>
        <end position="200"/>
    </location>
</feature>
<feature type="domain" description="EngB-type G" evidence="1">
    <location>
        <begin position="25"/>
        <end position="199"/>
    </location>
</feature>
<feature type="binding site" evidence="1">
    <location>
        <begin position="33"/>
        <end position="40"/>
    </location>
    <ligand>
        <name>GTP</name>
        <dbReference type="ChEBI" id="CHEBI:37565"/>
    </ligand>
</feature>
<feature type="binding site" evidence="1">
    <location>
        <position position="40"/>
    </location>
    <ligand>
        <name>Mg(2+)</name>
        <dbReference type="ChEBI" id="CHEBI:18420"/>
    </ligand>
</feature>
<feature type="binding site" evidence="1">
    <location>
        <begin position="60"/>
        <end position="64"/>
    </location>
    <ligand>
        <name>GTP</name>
        <dbReference type="ChEBI" id="CHEBI:37565"/>
    </ligand>
</feature>
<feature type="binding site" evidence="1">
    <location>
        <position position="62"/>
    </location>
    <ligand>
        <name>Mg(2+)</name>
        <dbReference type="ChEBI" id="CHEBI:18420"/>
    </ligand>
</feature>
<feature type="binding site" evidence="1">
    <location>
        <begin position="78"/>
        <end position="81"/>
    </location>
    <ligand>
        <name>GTP</name>
        <dbReference type="ChEBI" id="CHEBI:37565"/>
    </ligand>
</feature>
<feature type="binding site" evidence="1">
    <location>
        <begin position="145"/>
        <end position="148"/>
    </location>
    <ligand>
        <name>GTP</name>
        <dbReference type="ChEBI" id="CHEBI:37565"/>
    </ligand>
</feature>
<feature type="binding site" evidence="1">
    <location>
        <begin position="178"/>
        <end position="180"/>
    </location>
    <ligand>
        <name>GTP</name>
        <dbReference type="ChEBI" id="CHEBI:37565"/>
    </ligand>
</feature>
<organism>
    <name type="scientific">Legionella pneumophila (strain Paris)</name>
    <dbReference type="NCBI Taxonomy" id="297246"/>
    <lineage>
        <taxon>Bacteria</taxon>
        <taxon>Pseudomonadati</taxon>
        <taxon>Pseudomonadota</taxon>
        <taxon>Gammaproteobacteria</taxon>
        <taxon>Legionellales</taxon>
        <taxon>Legionellaceae</taxon>
        <taxon>Legionella</taxon>
    </lineage>
</organism>
<dbReference type="EMBL" id="CR628336">
    <property type="protein sequence ID" value="CAH11287.1"/>
    <property type="molecule type" value="Genomic_DNA"/>
</dbReference>
<dbReference type="SMR" id="Q5X8V4"/>
<dbReference type="KEGG" id="lpp:lpp0139"/>
<dbReference type="LegioList" id="lpp0139"/>
<dbReference type="HOGENOM" id="CLU_033732_1_0_6"/>
<dbReference type="GO" id="GO:0005829">
    <property type="term" value="C:cytosol"/>
    <property type="evidence" value="ECO:0007669"/>
    <property type="project" value="TreeGrafter"/>
</dbReference>
<dbReference type="GO" id="GO:0005525">
    <property type="term" value="F:GTP binding"/>
    <property type="evidence" value="ECO:0007669"/>
    <property type="project" value="UniProtKB-UniRule"/>
</dbReference>
<dbReference type="GO" id="GO:0046872">
    <property type="term" value="F:metal ion binding"/>
    <property type="evidence" value="ECO:0007669"/>
    <property type="project" value="UniProtKB-KW"/>
</dbReference>
<dbReference type="GO" id="GO:0000917">
    <property type="term" value="P:division septum assembly"/>
    <property type="evidence" value="ECO:0007669"/>
    <property type="project" value="UniProtKB-KW"/>
</dbReference>
<dbReference type="CDD" id="cd01876">
    <property type="entry name" value="YihA_EngB"/>
    <property type="match status" value="1"/>
</dbReference>
<dbReference type="FunFam" id="3.40.50.300:FF:000098">
    <property type="entry name" value="Probable GTP-binding protein EngB"/>
    <property type="match status" value="1"/>
</dbReference>
<dbReference type="Gene3D" id="3.40.50.300">
    <property type="entry name" value="P-loop containing nucleotide triphosphate hydrolases"/>
    <property type="match status" value="1"/>
</dbReference>
<dbReference type="HAMAP" id="MF_00321">
    <property type="entry name" value="GTPase_EngB"/>
    <property type="match status" value="1"/>
</dbReference>
<dbReference type="InterPro" id="IPR030393">
    <property type="entry name" value="G_ENGB_dom"/>
</dbReference>
<dbReference type="InterPro" id="IPR006073">
    <property type="entry name" value="GTP-bd"/>
</dbReference>
<dbReference type="InterPro" id="IPR019987">
    <property type="entry name" value="GTP-bd_ribosome_bio_YsxC"/>
</dbReference>
<dbReference type="InterPro" id="IPR027417">
    <property type="entry name" value="P-loop_NTPase"/>
</dbReference>
<dbReference type="NCBIfam" id="TIGR03598">
    <property type="entry name" value="GTPase_YsxC"/>
    <property type="match status" value="1"/>
</dbReference>
<dbReference type="PANTHER" id="PTHR11649:SF13">
    <property type="entry name" value="ENGB-TYPE G DOMAIN-CONTAINING PROTEIN"/>
    <property type="match status" value="1"/>
</dbReference>
<dbReference type="PANTHER" id="PTHR11649">
    <property type="entry name" value="MSS1/TRME-RELATED GTP-BINDING PROTEIN"/>
    <property type="match status" value="1"/>
</dbReference>
<dbReference type="Pfam" id="PF01926">
    <property type="entry name" value="MMR_HSR1"/>
    <property type="match status" value="1"/>
</dbReference>
<dbReference type="SUPFAM" id="SSF52540">
    <property type="entry name" value="P-loop containing nucleoside triphosphate hydrolases"/>
    <property type="match status" value="1"/>
</dbReference>
<dbReference type="PROSITE" id="PS51706">
    <property type="entry name" value="G_ENGB"/>
    <property type="match status" value="1"/>
</dbReference>
<comment type="function">
    <text evidence="1">Necessary for normal cell division and for the maintenance of normal septation.</text>
</comment>
<comment type="cofactor">
    <cofactor evidence="1">
        <name>Mg(2+)</name>
        <dbReference type="ChEBI" id="CHEBI:18420"/>
    </cofactor>
</comment>
<comment type="similarity">
    <text evidence="1">Belongs to the TRAFAC class TrmE-Era-EngA-EngB-Septin-like GTPase superfamily. EngB GTPase family.</text>
</comment>
<proteinExistence type="inferred from homology"/>
<reference key="1">
    <citation type="journal article" date="2004" name="Nat. Genet.">
        <title>Evidence in the Legionella pneumophila genome for exploitation of host cell functions and high genome plasticity.</title>
        <authorList>
            <person name="Cazalet C."/>
            <person name="Rusniok C."/>
            <person name="Brueggemann H."/>
            <person name="Zidane N."/>
            <person name="Magnier A."/>
            <person name="Ma L."/>
            <person name="Tichit M."/>
            <person name="Jarraud S."/>
            <person name="Bouchier C."/>
            <person name="Vandenesch F."/>
            <person name="Kunst F."/>
            <person name="Etienne J."/>
            <person name="Glaser P."/>
            <person name="Buchrieser C."/>
        </authorList>
    </citation>
    <scope>NUCLEOTIDE SEQUENCE [LARGE SCALE GENOMIC DNA]</scope>
    <source>
        <strain>Paris</strain>
    </source>
</reference>
<accession>Q5X8V4</accession>
<sequence length="200" mass="22848">MPINLYSKAVFLKSAARVNQLPEDSGYEVAFAGRSNAGKSSALNCLTNNKNLARTSKTPGRTQLINLFSLDEQRRLVDLPGYGYAKVAMEVKLEWQKNLAHYLEARQCLRGLILLMDVRHPLKDLDQILVNWALHRELPVHILLTKADKLSRSEVKNAVLKVRQYYELAEHLVSVQAFSSVKKDGVEELISVLDRWYEWN</sequence>
<name>ENGB_LEGPA</name>
<keyword id="KW-0131">Cell cycle</keyword>
<keyword id="KW-0132">Cell division</keyword>
<keyword id="KW-0342">GTP-binding</keyword>
<keyword id="KW-0460">Magnesium</keyword>
<keyword id="KW-0479">Metal-binding</keyword>
<keyword id="KW-0547">Nucleotide-binding</keyword>
<keyword id="KW-0717">Septation</keyword>
<protein>
    <recommendedName>
        <fullName evidence="1">Probable GTP-binding protein EngB</fullName>
    </recommendedName>
</protein>
<evidence type="ECO:0000255" key="1">
    <source>
        <dbReference type="HAMAP-Rule" id="MF_00321"/>
    </source>
</evidence>
<gene>
    <name evidence="1" type="primary">engB</name>
    <name type="ordered locus">lpp0139</name>
</gene>